<evidence type="ECO:0000250" key="1"/>
<evidence type="ECO:0000250" key="2">
    <source>
        <dbReference type="UniProtKB" id="P61073"/>
    </source>
</evidence>
<evidence type="ECO:0000250" key="3">
    <source>
        <dbReference type="UniProtKB" id="P70658"/>
    </source>
</evidence>
<evidence type="ECO:0000255" key="4">
    <source>
        <dbReference type="PROSITE-ProRule" id="PRU00521"/>
    </source>
</evidence>
<evidence type="ECO:0000256" key="5">
    <source>
        <dbReference type="SAM" id="MobiDB-lite"/>
    </source>
</evidence>
<evidence type="ECO:0000305" key="6"/>
<proteinExistence type="evidence at transcript level"/>
<comment type="function">
    <text evidence="2 3">Receptor for the C-X-C chemokine CXCL12/SDF-1 that transduces a signal by increasing intracellular calcium ion levels and enhancing MAPK1/MAPK3 activation. Involved in the AKT signaling cascade (By similarity). Plays a role in regulation of cell migration, e.g. during wound healing. Acts as a receptor for extracellular ubiquitin; leading to enhanced intracellular calcium ions and reduced cellular cAMP levels. Binds bacterial lipopolysaccharide (LPS) et mediates LPS-induced inflammatory response, including TNF secretion by monocytes (By similarity). Involved in hematopoiesis and in cardiac ventricular septum formation. Also plays an essential role in vascularization of the gastrointestinal tract, probably by regulating vascular branching and/or remodeling processes in endothelial cells. Involved in cerebellar development. In the CNS, could mediate hippocampal-neuron survival (By similarity).</text>
</comment>
<comment type="subunit">
    <text evidence="2">Monomer. Can form homodimers. Interacts with CD164. Interacts with ARRB2; the interaction is dependent on the C-terminal phosphorylation of CXCR4 and allows activation of MAPK1 and MAPK3. Interacts with ARR3; the interaction is dependent on the C-terminal phosphorylation of CXCR4 and modulates calcium mobilization. Interacts with RNF113A; the interaction, enhanced by CXCL12, promotes CXCR4 ubiquitination and subsequent degradation. Interacts (via the cytoplasmic C-terminal) with ITCH (via the WW domains I and II); the interaction, enhanced by CXCL12, promotes CXCR4 ubiquitination and leads to its degradation. Interacts with extracellular ubiquitin. Interacts with DBN1; this interaction is enhanced by antigenic stimulation. Following LPS binding, may form a complex with GDF5, HSP90AA1 and HSPA8.</text>
</comment>
<comment type="subcellular location">
    <subcellularLocation>
        <location evidence="2">Cell membrane</location>
        <topology evidence="2">Multi-pass membrane protein</topology>
    </subcellularLocation>
    <subcellularLocation>
        <location evidence="1">Cell junction</location>
    </subcellularLocation>
    <subcellularLocation>
        <location evidence="1">Early endosome</location>
    </subcellularLocation>
    <subcellularLocation>
        <location evidence="1">Late endosome</location>
    </subcellularLocation>
    <subcellularLocation>
        <location evidence="1">Lysosome</location>
    </subcellularLocation>
    <text evidence="1">In unstimulated cells, diffuse pattern on plasma membrane. On agonist stimulation, colocalizes with ITCH at the plasma membrane where it becomes ubiquitinated (By similarity). In the presence of antigen, distributes to the immunological synapse forming at the T-cell-APC contact area, where it localizes at the peripheral and distal supramolecular activation cluster (SMAC) (By similarity).</text>
</comment>
<comment type="PTM">
    <text evidence="2">Phosphorylated on agonist stimulation. Rapidly phosphorylated on serine and threonine residues in the C-terminal. Phosphorylation at Ser-325 and Ser-326 leads to recruitment of ITCH, ubiquitination and protein degradation.</text>
</comment>
<comment type="PTM">
    <text evidence="2">Ubiquitinated after ligand binding, leading to its degradation. Ubiquitinated by ITCH at the cell membrane on agonist stimulation. The ubiquitin-dependent mechanism, endosomal sorting complex required for transport (ESCRT), then targets CXCR4 for lysosomal degradation. This process is dependent also on prior Ser-/Thr-phosphorylation in the C-terminal of CXCR4. Also binding of ARRB1 to STAM negatively regulates CXCR4 sorting to lysosomes though modulating ubiquitination of SFR5S.</text>
</comment>
<comment type="PTM">
    <text evidence="2">Sulfation is required for efficient binding of CXCL12/SDF-1alpha and promotes its dimerization.</text>
</comment>
<comment type="PTM">
    <text evidence="2">O- and N-glycosylated. N-glycosylation can mask coreceptor function. The O-glycosylation chondroitin sulfate attachment does not affect interaction with CXCL12/SDF-1alpha nor its coreceptor activity.</text>
</comment>
<comment type="similarity">
    <text evidence="4">Belongs to the G-protein coupled receptor 1 family.</text>
</comment>
<feature type="chain" id="PRO_0000247979" description="C-X-C chemokine receptor type 4">
    <location>
        <begin position="1"/>
        <end position="353"/>
    </location>
</feature>
<feature type="topological domain" description="Extracellular" evidence="6">
    <location>
        <begin position="1"/>
        <end position="39"/>
    </location>
</feature>
<feature type="transmembrane region" description="Helical; Name=1" evidence="2">
    <location>
        <begin position="40"/>
        <end position="64"/>
    </location>
</feature>
<feature type="topological domain" description="Cytoplasmic" evidence="6">
    <location>
        <begin position="65"/>
        <end position="78"/>
    </location>
</feature>
<feature type="transmembrane region" description="Helical; Name=2" evidence="2">
    <location>
        <begin position="79"/>
        <end position="100"/>
    </location>
</feature>
<feature type="topological domain" description="Extracellular" evidence="6">
    <location>
        <begin position="101"/>
        <end position="111"/>
    </location>
</feature>
<feature type="transmembrane region" description="Helical; Name=3" evidence="2">
    <location>
        <begin position="112"/>
        <end position="131"/>
    </location>
</feature>
<feature type="topological domain" description="Cytoplasmic" evidence="6">
    <location>
        <begin position="132"/>
        <end position="155"/>
    </location>
</feature>
<feature type="transmembrane region" description="Helical; Name=4" evidence="2">
    <location>
        <begin position="156"/>
        <end position="175"/>
    </location>
</feature>
<feature type="topological domain" description="Extracellular" evidence="6">
    <location>
        <begin position="176"/>
        <end position="196"/>
    </location>
</feature>
<feature type="transmembrane region" description="Helical; Name=5" evidence="2">
    <location>
        <begin position="197"/>
        <end position="217"/>
    </location>
</feature>
<feature type="topological domain" description="Cytoplasmic" evidence="6">
    <location>
        <begin position="218"/>
        <end position="242"/>
    </location>
</feature>
<feature type="transmembrane region" description="Helical; Name=6" evidence="2">
    <location>
        <begin position="243"/>
        <end position="262"/>
    </location>
</feature>
<feature type="topological domain" description="Extracellular" evidence="6">
    <location>
        <begin position="263"/>
        <end position="283"/>
    </location>
</feature>
<feature type="transmembrane region" description="Helical; Name=7" evidence="2">
    <location>
        <begin position="284"/>
        <end position="303"/>
    </location>
</feature>
<feature type="topological domain" description="Cytoplasmic" evidence="6">
    <location>
        <begin position="304"/>
        <end position="353"/>
    </location>
</feature>
<feature type="region of interest" description="Important for chemokine binding and signaling" evidence="1">
    <location>
        <begin position="1"/>
        <end position="22"/>
    </location>
</feature>
<feature type="region of interest" description="Chemokine binding" evidence="1">
    <location>
        <begin position="95"/>
        <end position="98"/>
    </location>
</feature>
<feature type="region of interest" description="Chemokine binding" evidence="1">
    <location>
        <begin position="114"/>
        <end position="118"/>
    </location>
</feature>
<feature type="region of interest" description="Involved in dimerization; when bound to chemokine" evidence="1">
    <location>
        <begin position="136"/>
        <end position="148"/>
    </location>
</feature>
<feature type="region of interest" description="Chemokine binding, important for signaling" evidence="1">
    <location>
        <begin position="187"/>
        <end position="191"/>
    </location>
</feature>
<feature type="region of interest" description="Involved in dimerization" evidence="1">
    <location>
        <begin position="192"/>
        <end position="211"/>
    </location>
</feature>
<feature type="region of interest" description="Involved in dimerization" evidence="1">
    <location>
        <begin position="267"/>
        <end position="269"/>
    </location>
</feature>
<feature type="region of interest" description="Disordered" evidence="5">
    <location>
        <begin position="330"/>
        <end position="353"/>
    </location>
</feature>
<feature type="short sequence motif" description="Important for signaling" evidence="1">
    <location>
        <begin position="134"/>
        <end position="136"/>
    </location>
</feature>
<feature type="compositionally biased region" description="Low complexity" evidence="5">
    <location>
        <begin position="338"/>
        <end position="353"/>
    </location>
</feature>
<feature type="site" description="Chemokine binding" evidence="1">
    <location>
        <position position="172"/>
    </location>
</feature>
<feature type="site" description="Chemokine binding" evidence="1">
    <location>
        <position position="289"/>
    </location>
</feature>
<feature type="modified residue" description="Sulfotyrosine" evidence="2">
    <location>
        <position position="7"/>
    </location>
</feature>
<feature type="modified residue" description="Sulfotyrosine" evidence="2">
    <location>
        <position position="12"/>
    </location>
</feature>
<feature type="modified residue" description="Sulfotyrosine" evidence="2">
    <location>
        <position position="22"/>
    </location>
</feature>
<feature type="modified residue" description="Phosphoserine" evidence="2">
    <location>
        <position position="320"/>
    </location>
</feature>
<feature type="modified residue" description="Phosphoserine" evidence="2">
    <location>
        <position position="322"/>
    </location>
</feature>
<feature type="modified residue" description="Phosphoserine; by PKC and GRK6" evidence="2">
    <location>
        <position position="325"/>
    </location>
</feature>
<feature type="modified residue" description="Phosphoserine; by PKC and GRK6" evidence="2">
    <location>
        <position position="326"/>
    </location>
</feature>
<feature type="modified residue" description="Phosphoserine; by GRK6" evidence="2">
    <location>
        <position position="331"/>
    </location>
</feature>
<feature type="modified residue" description="Phosphoserine; by GRK6" evidence="2">
    <location>
        <position position="340"/>
    </location>
</feature>
<feature type="modified residue" description="Phosphoserine" evidence="2">
    <location>
        <position position="349"/>
    </location>
</feature>
<feature type="modified residue" description="Phosphoserine" evidence="2">
    <location>
        <position position="352"/>
    </location>
</feature>
<feature type="glycosylation site" description="N-linked (GlcNAc...) asparagine" evidence="1">
    <location>
        <position position="11"/>
    </location>
</feature>
<feature type="glycosylation site" description="O-linked (Xyl...) (chondroitin sulfate) serine" evidence="2">
    <location>
        <position position="19"/>
    </location>
</feature>
<feature type="disulfide bond" evidence="4">
    <location>
        <begin position="29"/>
        <end position="275"/>
    </location>
</feature>
<feature type="disulfide bond" evidence="4">
    <location>
        <begin position="110"/>
        <end position="187"/>
    </location>
</feature>
<feature type="cross-link" description="Glycyl lysine isopeptide (Lys-Gly) (interchain with G-Cter in ubiquitin)" evidence="2">
    <location>
        <position position="332"/>
    </location>
</feature>
<dbReference type="EMBL" id="DQ182699">
    <property type="protein sequence ID" value="ABA28309.1"/>
    <property type="molecule type" value="mRNA"/>
</dbReference>
<dbReference type="RefSeq" id="NP_001041491.1">
    <property type="nucleotide sequence ID" value="NM_001048026.1"/>
</dbReference>
<dbReference type="SMR" id="Q3LSL6"/>
<dbReference type="FunCoup" id="Q3LSL6">
    <property type="interactions" value="168"/>
</dbReference>
<dbReference type="STRING" id="9615.ENSCAFP00000007600"/>
<dbReference type="GlyCosmos" id="Q3LSL6">
    <property type="glycosylation" value="2 sites, No reported glycans"/>
</dbReference>
<dbReference type="PaxDb" id="9612-ENSCAFP00000007600"/>
<dbReference type="Ensembl" id="ENSCAFT00000008205.5">
    <property type="protein sequence ID" value="ENSCAFP00000007600.5"/>
    <property type="gene ID" value="ENSCAFG00000005109.5"/>
</dbReference>
<dbReference type="Ensembl" id="ENSCAFT00030033788.1">
    <property type="protein sequence ID" value="ENSCAFP00030029472.1"/>
    <property type="gene ID" value="ENSCAFG00030018330.1"/>
</dbReference>
<dbReference type="Ensembl" id="ENSCAFT00040028117.1">
    <property type="protein sequence ID" value="ENSCAFP00040024426.1"/>
    <property type="gene ID" value="ENSCAFG00040015264.1"/>
</dbReference>
<dbReference type="Ensembl" id="ENSCAFT00845017890.1">
    <property type="protein sequence ID" value="ENSCAFP00845013936.1"/>
    <property type="gene ID" value="ENSCAFG00845010172.1"/>
</dbReference>
<dbReference type="Ensembl" id="ENSCAFT00845045109.1">
    <property type="protein sequence ID" value="ENSCAFP00845035365.1"/>
    <property type="gene ID" value="ENSCAFG00845025560.1"/>
</dbReference>
<dbReference type="GeneID" id="119863891"/>
<dbReference type="CTD" id="7852"/>
<dbReference type="VEuPathDB" id="HostDB:ENSCAFG00845010172"/>
<dbReference type="VEuPathDB" id="HostDB:ENSCAFG00845025560"/>
<dbReference type="VGNC" id="VGNC:39751">
    <property type="gene designation" value="CXCR4"/>
</dbReference>
<dbReference type="eggNOG" id="KOG3656">
    <property type="taxonomic scope" value="Eukaryota"/>
</dbReference>
<dbReference type="GeneTree" id="ENSGT01050000244848"/>
<dbReference type="HOGENOM" id="CLU_009579_8_3_1"/>
<dbReference type="InParanoid" id="Q3LSL6"/>
<dbReference type="OMA" id="YVCQRFY"/>
<dbReference type="OrthoDB" id="8413490at2759"/>
<dbReference type="TreeFam" id="TF330966"/>
<dbReference type="Proteomes" id="UP000002254">
    <property type="component" value="Chromosome 19"/>
</dbReference>
<dbReference type="Proteomes" id="UP000694429">
    <property type="component" value="Chromosome 19"/>
</dbReference>
<dbReference type="Proteomes" id="UP000694542">
    <property type="component" value="Chromosome 19"/>
</dbReference>
<dbReference type="Proteomes" id="UP000805418">
    <property type="component" value="Chromosome 19"/>
</dbReference>
<dbReference type="Proteomes" id="UP000805418">
    <property type="component" value="Unassembled WGS sequence"/>
</dbReference>
<dbReference type="GO" id="GO:0070161">
    <property type="term" value="C:anchoring junction"/>
    <property type="evidence" value="ECO:0007669"/>
    <property type="project" value="UniProtKB-SubCell"/>
</dbReference>
<dbReference type="GO" id="GO:0005769">
    <property type="term" value="C:early endosome"/>
    <property type="evidence" value="ECO:0000250"/>
    <property type="project" value="UniProtKB"/>
</dbReference>
<dbReference type="GO" id="GO:0005770">
    <property type="term" value="C:late endosome"/>
    <property type="evidence" value="ECO:0000250"/>
    <property type="project" value="UniProtKB"/>
</dbReference>
<dbReference type="GO" id="GO:0005764">
    <property type="term" value="C:lysosome"/>
    <property type="evidence" value="ECO:0000250"/>
    <property type="project" value="UniProtKB"/>
</dbReference>
<dbReference type="GO" id="GO:0005886">
    <property type="term" value="C:plasma membrane"/>
    <property type="evidence" value="ECO:0000250"/>
    <property type="project" value="UniProtKB"/>
</dbReference>
<dbReference type="GO" id="GO:0038147">
    <property type="term" value="F:C-X-C motif chemokine 12 receptor activity"/>
    <property type="evidence" value="ECO:0000250"/>
    <property type="project" value="UniProtKB"/>
</dbReference>
<dbReference type="GO" id="GO:0019955">
    <property type="term" value="F:cytokine binding"/>
    <property type="evidence" value="ECO:0007669"/>
    <property type="project" value="InterPro"/>
</dbReference>
<dbReference type="GO" id="GO:0071345">
    <property type="term" value="P:cellular response to cytokine stimulus"/>
    <property type="evidence" value="ECO:0000250"/>
    <property type="project" value="UniProtKB"/>
</dbReference>
<dbReference type="GO" id="GO:0006935">
    <property type="term" value="P:chemotaxis"/>
    <property type="evidence" value="ECO:0007669"/>
    <property type="project" value="InterPro"/>
</dbReference>
<dbReference type="GO" id="GO:0038160">
    <property type="term" value="P:CXCL12-activated CXCR4 signaling pathway"/>
    <property type="evidence" value="ECO:0000250"/>
    <property type="project" value="UniProtKB"/>
</dbReference>
<dbReference type="CDD" id="cd15179">
    <property type="entry name" value="7tmA_CXCR4"/>
    <property type="match status" value="1"/>
</dbReference>
<dbReference type="FunFam" id="1.20.1070.10:FF:000063">
    <property type="entry name" value="C-X-C chemokine receptor type 4"/>
    <property type="match status" value="1"/>
</dbReference>
<dbReference type="Gene3D" id="1.20.1070.10">
    <property type="entry name" value="Rhodopsin 7-helix transmembrane proteins"/>
    <property type="match status" value="1"/>
</dbReference>
<dbReference type="InterPro" id="IPR050119">
    <property type="entry name" value="CCR1-9-like"/>
</dbReference>
<dbReference type="InterPro" id="IPR022726">
    <property type="entry name" value="Chemokine_CXCR4_N_dom"/>
</dbReference>
<dbReference type="InterPro" id="IPR000355">
    <property type="entry name" value="Chemokine_rcpt"/>
</dbReference>
<dbReference type="InterPro" id="IPR001277">
    <property type="entry name" value="CXCR4/ACKR2"/>
</dbReference>
<dbReference type="InterPro" id="IPR000276">
    <property type="entry name" value="GPCR_Rhodpsn"/>
</dbReference>
<dbReference type="InterPro" id="IPR017452">
    <property type="entry name" value="GPCR_Rhodpsn_7TM"/>
</dbReference>
<dbReference type="PANTHER" id="PTHR10489:SF594">
    <property type="entry name" value="C-X-C CHEMOKINE RECEPTOR TYPE 4"/>
    <property type="match status" value="1"/>
</dbReference>
<dbReference type="PANTHER" id="PTHR10489">
    <property type="entry name" value="CELL ADHESION MOLECULE"/>
    <property type="match status" value="1"/>
</dbReference>
<dbReference type="Pfam" id="PF00001">
    <property type="entry name" value="7tm_1"/>
    <property type="match status" value="1"/>
</dbReference>
<dbReference type="Pfam" id="PF12109">
    <property type="entry name" value="CXCR4_N"/>
    <property type="match status" value="1"/>
</dbReference>
<dbReference type="PRINTS" id="PR00657">
    <property type="entry name" value="CCCHEMOKINER"/>
</dbReference>
<dbReference type="PRINTS" id="PR00645">
    <property type="entry name" value="CXCCHMKINER4"/>
</dbReference>
<dbReference type="PRINTS" id="PR00237">
    <property type="entry name" value="GPCRRHODOPSN"/>
</dbReference>
<dbReference type="SUPFAM" id="SSF81321">
    <property type="entry name" value="Family A G protein-coupled receptor-like"/>
    <property type="match status" value="1"/>
</dbReference>
<dbReference type="PROSITE" id="PS00237">
    <property type="entry name" value="G_PROTEIN_RECEP_F1_1"/>
    <property type="match status" value="1"/>
</dbReference>
<dbReference type="PROSITE" id="PS50262">
    <property type="entry name" value="G_PROTEIN_RECEP_F1_2"/>
    <property type="match status" value="1"/>
</dbReference>
<gene>
    <name type="primary">CXCR4</name>
</gene>
<reference key="1">
    <citation type="submission" date="2005-08" db="EMBL/GenBank/DDBJ databases">
        <title>Evaluation of the canine CXCR4 and CXCL12 genes as a candidate for chronic neutropenia with myelokathexis in a border collie dog.</title>
        <authorList>
            <person name="Tsuchida S."/>
            <person name="Kagi A."/>
            <person name="Takahashi T."/>
        </authorList>
    </citation>
    <scope>NUCLEOTIDE SEQUENCE [MRNA]</scope>
</reference>
<organism>
    <name type="scientific">Canis lupus familiaris</name>
    <name type="common">Dog</name>
    <name type="synonym">Canis familiaris</name>
    <dbReference type="NCBI Taxonomy" id="9615"/>
    <lineage>
        <taxon>Eukaryota</taxon>
        <taxon>Metazoa</taxon>
        <taxon>Chordata</taxon>
        <taxon>Craniata</taxon>
        <taxon>Vertebrata</taxon>
        <taxon>Euteleostomi</taxon>
        <taxon>Mammalia</taxon>
        <taxon>Eutheria</taxon>
        <taxon>Laurasiatheria</taxon>
        <taxon>Carnivora</taxon>
        <taxon>Caniformia</taxon>
        <taxon>Canidae</taxon>
        <taxon>Canis</taxon>
    </lineage>
</organism>
<sequence>MEELHIYPSDNYTEEDLGSGDYDSMKEPCFREENAHFNRIFLPTVYSIIFLTGIVGNGLVILVMGYQKKLRSMTDKYRLHLSVADLLFVLTLPFWAVEAVANWYFGNFLCKAVHVIYTVNLYSSVLILAFISLDRYLAIVHATNSQRPRKLLAEKVVYVGVWIPALLLTIPDFIFANVREADDRYICDRFYPNDSWLVVFQFQHIMVGLILPGIVILSCYCIIISKLSHSKGYQKRKALKTTVILILAFFACWLPYYIGISIDSFILLEIIKQGCEFEKTVHKWISITEALAFFHCCLNPILYAFLGAKFKTSAQHALTSVSRGSSLKILSKGKRGGHSSVSTESESSSFHSS</sequence>
<protein>
    <recommendedName>
        <fullName>C-X-C chemokine receptor type 4</fullName>
        <shortName>CXC-R4</shortName>
        <shortName>CXCR-4</shortName>
    </recommendedName>
    <cdAntigenName>CD184</cdAntigenName>
</protein>
<accession>Q3LSL6</accession>
<name>CXCR4_CANLF</name>
<keyword id="KW-0965">Cell junction</keyword>
<keyword id="KW-1003">Cell membrane</keyword>
<keyword id="KW-1015">Disulfide bond</keyword>
<keyword id="KW-0967">Endosome</keyword>
<keyword id="KW-0297">G-protein coupled receptor</keyword>
<keyword id="KW-0325">Glycoprotein</keyword>
<keyword id="KW-1017">Isopeptide bond</keyword>
<keyword id="KW-0458">Lysosome</keyword>
<keyword id="KW-0472">Membrane</keyword>
<keyword id="KW-0597">Phosphoprotein</keyword>
<keyword id="KW-0654">Proteoglycan</keyword>
<keyword id="KW-0675">Receptor</keyword>
<keyword id="KW-1185">Reference proteome</keyword>
<keyword id="KW-0765">Sulfation</keyword>
<keyword id="KW-0807">Transducer</keyword>
<keyword id="KW-0812">Transmembrane</keyword>
<keyword id="KW-1133">Transmembrane helix</keyword>
<keyword id="KW-0832">Ubl conjugation</keyword>